<evidence type="ECO:0000250" key="1"/>
<evidence type="ECO:0000255" key="2"/>
<evidence type="ECO:0000305" key="3"/>
<comment type="function">
    <text evidence="1">The branched-chain alpha-keto dehydrogenase complex catalyzes the overall conversion of alpha-keto acids to acyl-CoA and CO(2). It contains multiple copies of three enzymatic components: branched-chain alpha-keto acid decarboxylase (E1), lipoamide acyltransferase (E2) and lipoamide dehydrogenase (E3) (By similarity).</text>
</comment>
<comment type="catalytic activity">
    <reaction>
        <text>N(6)-[(R)-lipoyl]-L-lysyl-[protein] + 3-methyl-2-oxobutanoate + H(+) = N(6)-[(R)-S(8)-2-methylpropanoyldihydrolipoyl]-L-lysyl-[protein] + CO2</text>
        <dbReference type="Rhea" id="RHEA:13457"/>
        <dbReference type="Rhea" id="RHEA-COMP:10474"/>
        <dbReference type="Rhea" id="RHEA-COMP:10497"/>
        <dbReference type="ChEBI" id="CHEBI:11851"/>
        <dbReference type="ChEBI" id="CHEBI:15378"/>
        <dbReference type="ChEBI" id="CHEBI:16526"/>
        <dbReference type="ChEBI" id="CHEBI:83099"/>
        <dbReference type="ChEBI" id="CHEBI:83142"/>
        <dbReference type="EC" id="1.2.4.4"/>
    </reaction>
</comment>
<comment type="cofactor">
    <cofactor evidence="1">
        <name>thiamine diphosphate</name>
        <dbReference type="ChEBI" id="CHEBI:58937"/>
    </cofactor>
</comment>
<comment type="subunit">
    <text evidence="1">Heterotetramer of alpha and beta chains.</text>
</comment>
<comment type="subcellular location">
    <subcellularLocation>
        <location evidence="1">Mitochondrion matrix</location>
    </subcellularLocation>
</comment>
<comment type="miscellaneous">
    <text evidence="1">Bound potassium ions stabilize the protein structure.</text>
</comment>
<comment type="similarity">
    <text evidence="3">Belongs to the BCKDHA family.</text>
</comment>
<sequence>MISQSYRILSRISRNNELKKTFLTNLNCKSSSPSIIRSFCKKQNLDENFEYTNKLEVQELKHYIPCYTIMDQEGVVSKPDQDPNFSKEEVIKMYTTMLTLNVMDSILYDVQRQGRISFYMTSFGEEAIHIGSAAALEMSDTIFAQYRETGVFMWRGFTINDIINQCCTNEHDLGKGRQMPMHFGSRKINLQTISSPLTTQLPQAVGSSYAQKLAGEKNCTIVYFGEGAASEGDFHAAMNFAAALSTPTIFFCRNNKWAISTPSKEQYKGDGIAGRGPNGYGMKTIRVDGNDIWAVYNVTKLARKIAVEEQVPVLIEAMTYRVGHHSTSDDSSRYRTVEEINAWKEGKNPISRLRNYMNHKGWWSDAQEKETIANARTTVRESLVNAEKQYKPSINEIFTDVYDKPTPNLIEQQKELIEHLKLYPDEYPLNQFADSKLILKD</sequence>
<protein>
    <recommendedName>
        <fullName>2-oxoisovalerate dehydrogenase subunit alpha, mitochondrial</fullName>
        <ecNumber>1.2.4.4</ecNumber>
    </recommendedName>
    <alternativeName>
        <fullName>Branched-chain alpha-keto acid dehydrogenase E1 component alpha chain</fullName>
        <shortName>BCKDE1A</shortName>
        <shortName>BCKDH E1-alpha</shortName>
    </alternativeName>
</protein>
<dbReference type="EC" id="1.2.4.4"/>
<dbReference type="EMBL" id="AAFI02000085">
    <property type="protein sequence ID" value="EAL64343.1"/>
    <property type="molecule type" value="Genomic_DNA"/>
</dbReference>
<dbReference type="RefSeq" id="XP_637809.1">
    <property type="nucleotide sequence ID" value="XM_632717.1"/>
</dbReference>
<dbReference type="SMR" id="Q54M22"/>
<dbReference type="FunCoup" id="Q54M22">
    <property type="interactions" value="101"/>
</dbReference>
<dbReference type="STRING" id="44689.Q54M22"/>
<dbReference type="PaxDb" id="44689-DDB0230190"/>
<dbReference type="EnsemblProtists" id="EAL64343">
    <property type="protein sequence ID" value="EAL64343"/>
    <property type="gene ID" value="DDB_G0286335"/>
</dbReference>
<dbReference type="GeneID" id="8625523"/>
<dbReference type="KEGG" id="ddi:DDB_G0286335"/>
<dbReference type="dictyBase" id="DDB_G0286335">
    <property type="gene designation" value="bkdA"/>
</dbReference>
<dbReference type="VEuPathDB" id="AmoebaDB:DDB_G0286335"/>
<dbReference type="eggNOG" id="KOG1182">
    <property type="taxonomic scope" value="Eukaryota"/>
</dbReference>
<dbReference type="HOGENOM" id="CLU_029393_1_2_1"/>
<dbReference type="InParanoid" id="Q54M22"/>
<dbReference type="OMA" id="GMFRGVN"/>
<dbReference type="PhylomeDB" id="Q54M22"/>
<dbReference type="Reactome" id="R-DDI-9859138">
    <property type="pathway name" value="BCKDH synthesizes BCAA-CoA from KIC, KMVA, KIV"/>
</dbReference>
<dbReference type="PRO" id="PR:Q54M22"/>
<dbReference type="Proteomes" id="UP000002195">
    <property type="component" value="Chromosome 4"/>
</dbReference>
<dbReference type="GO" id="GO:0160157">
    <property type="term" value="C:branched-chain alpha-ketoacid dehydrogenase complex"/>
    <property type="evidence" value="ECO:0000305"/>
    <property type="project" value="dictyBase"/>
</dbReference>
<dbReference type="GO" id="GO:0005759">
    <property type="term" value="C:mitochondrial matrix"/>
    <property type="evidence" value="ECO:0007669"/>
    <property type="project" value="UniProtKB-SubCell"/>
</dbReference>
<dbReference type="GO" id="GO:0003863">
    <property type="term" value="F:3-methyl-2-oxobutanoate dehydrogenase (2-methylpropanoyl-transferring) activity"/>
    <property type="evidence" value="ECO:0000250"/>
    <property type="project" value="dictyBase"/>
</dbReference>
<dbReference type="GO" id="GO:0046872">
    <property type="term" value="F:metal ion binding"/>
    <property type="evidence" value="ECO:0007669"/>
    <property type="project" value="UniProtKB-KW"/>
</dbReference>
<dbReference type="GO" id="GO:0009083">
    <property type="term" value="P:branched-chain amino acid catabolic process"/>
    <property type="evidence" value="ECO:0000318"/>
    <property type="project" value="GO_Central"/>
</dbReference>
<dbReference type="CDD" id="cd02000">
    <property type="entry name" value="TPP_E1_PDC_ADC_BCADC"/>
    <property type="match status" value="1"/>
</dbReference>
<dbReference type="FunFam" id="3.40.50.970:FF:000015">
    <property type="entry name" value="2-oxoisovalerate dehydrogenase subunit alpha"/>
    <property type="match status" value="1"/>
</dbReference>
<dbReference type="Gene3D" id="3.40.50.970">
    <property type="match status" value="1"/>
</dbReference>
<dbReference type="InterPro" id="IPR050771">
    <property type="entry name" value="Alpha-ketoacid_DH_E1_comp"/>
</dbReference>
<dbReference type="InterPro" id="IPR001017">
    <property type="entry name" value="DH_E1"/>
</dbReference>
<dbReference type="InterPro" id="IPR029061">
    <property type="entry name" value="THDP-binding"/>
</dbReference>
<dbReference type="PANTHER" id="PTHR43380">
    <property type="entry name" value="2-OXOISOVALERATE DEHYDROGENASE SUBUNIT ALPHA, MITOCHONDRIAL"/>
    <property type="match status" value="1"/>
</dbReference>
<dbReference type="PANTHER" id="PTHR43380:SF1">
    <property type="entry name" value="2-OXOISOVALERATE DEHYDROGENASE SUBUNIT ALPHA, MITOCHONDRIAL"/>
    <property type="match status" value="1"/>
</dbReference>
<dbReference type="Pfam" id="PF00676">
    <property type="entry name" value="E1_dh"/>
    <property type="match status" value="1"/>
</dbReference>
<dbReference type="SUPFAM" id="SSF52518">
    <property type="entry name" value="Thiamin diphosphate-binding fold (THDP-binding)"/>
    <property type="match status" value="1"/>
</dbReference>
<reference key="1">
    <citation type="journal article" date="2005" name="Nature">
        <title>The genome of the social amoeba Dictyostelium discoideum.</title>
        <authorList>
            <person name="Eichinger L."/>
            <person name="Pachebat J.A."/>
            <person name="Gloeckner G."/>
            <person name="Rajandream M.A."/>
            <person name="Sucgang R."/>
            <person name="Berriman M."/>
            <person name="Song J."/>
            <person name="Olsen R."/>
            <person name="Szafranski K."/>
            <person name="Xu Q."/>
            <person name="Tunggal B."/>
            <person name="Kummerfeld S."/>
            <person name="Madera M."/>
            <person name="Konfortov B.A."/>
            <person name="Rivero F."/>
            <person name="Bankier A.T."/>
            <person name="Lehmann R."/>
            <person name="Hamlin N."/>
            <person name="Davies R."/>
            <person name="Gaudet P."/>
            <person name="Fey P."/>
            <person name="Pilcher K."/>
            <person name="Chen G."/>
            <person name="Saunders D."/>
            <person name="Sodergren E.J."/>
            <person name="Davis P."/>
            <person name="Kerhornou A."/>
            <person name="Nie X."/>
            <person name="Hall N."/>
            <person name="Anjard C."/>
            <person name="Hemphill L."/>
            <person name="Bason N."/>
            <person name="Farbrother P."/>
            <person name="Desany B."/>
            <person name="Just E."/>
            <person name="Morio T."/>
            <person name="Rost R."/>
            <person name="Churcher C.M."/>
            <person name="Cooper J."/>
            <person name="Haydock S."/>
            <person name="van Driessche N."/>
            <person name="Cronin A."/>
            <person name="Goodhead I."/>
            <person name="Muzny D.M."/>
            <person name="Mourier T."/>
            <person name="Pain A."/>
            <person name="Lu M."/>
            <person name="Harper D."/>
            <person name="Lindsay R."/>
            <person name="Hauser H."/>
            <person name="James K.D."/>
            <person name="Quiles M."/>
            <person name="Madan Babu M."/>
            <person name="Saito T."/>
            <person name="Buchrieser C."/>
            <person name="Wardroper A."/>
            <person name="Felder M."/>
            <person name="Thangavelu M."/>
            <person name="Johnson D."/>
            <person name="Knights A."/>
            <person name="Loulseged H."/>
            <person name="Mungall K.L."/>
            <person name="Oliver K."/>
            <person name="Price C."/>
            <person name="Quail M.A."/>
            <person name="Urushihara H."/>
            <person name="Hernandez J."/>
            <person name="Rabbinowitsch E."/>
            <person name="Steffen D."/>
            <person name="Sanders M."/>
            <person name="Ma J."/>
            <person name="Kohara Y."/>
            <person name="Sharp S."/>
            <person name="Simmonds M.N."/>
            <person name="Spiegler S."/>
            <person name="Tivey A."/>
            <person name="Sugano S."/>
            <person name="White B."/>
            <person name="Walker D."/>
            <person name="Woodward J.R."/>
            <person name="Winckler T."/>
            <person name="Tanaka Y."/>
            <person name="Shaulsky G."/>
            <person name="Schleicher M."/>
            <person name="Weinstock G.M."/>
            <person name="Rosenthal A."/>
            <person name="Cox E.C."/>
            <person name="Chisholm R.L."/>
            <person name="Gibbs R.A."/>
            <person name="Loomis W.F."/>
            <person name="Platzer M."/>
            <person name="Kay R.R."/>
            <person name="Williams J.G."/>
            <person name="Dear P.H."/>
            <person name="Noegel A.A."/>
            <person name="Barrell B.G."/>
            <person name="Kuspa A."/>
        </authorList>
    </citation>
    <scope>NUCLEOTIDE SEQUENCE [LARGE SCALE GENOMIC DNA]</scope>
    <source>
        <strain>AX4</strain>
    </source>
</reference>
<proteinExistence type="inferred from homology"/>
<name>ODBA_DICDI</name>
<organism>
    <name type="scientific">Dictyostelium discoideum</name>
    <name type="common">Social amoeba</name>
    <dbReference type="NCBI Taxonomy" id="44689"/>
    <lineage>
        <taxon>Eukaryota</taxon>
        <taxon>Amoebozoa</taxon>
        <taxon>Evosea</taxon>
        <taxon>Eumycetozoa</taxon>
        <taxon>Dictyostelia</taxon>
        <taxon>Dictyosteliales</taxon>
        <taxon>Dictyosteliaceae</taxon>
        <taxon>Dictyostelium</taxon>
    </lineage>
</organism>
<keyword id="KW-0479">Metal-binding</keyword>
<keyword id="KW-0496">Mitochondrion</keyword>
<keyword id="KW-0560">Oxidoreductase</keyword>
<keyword id="KW-0630">Potassium</keyword>
<keyword id="KW-1185">Reference proteome</keyword>
<keyword id="KW-0786">Thiamine pyrophosphate</keyword>
<keyword id="KW-0809">Transit peptide</keyword>
<feature type="transit peptide" description="Mitochondrion" evidence="2">
    <location>
        <begin position="1"/>
        <end position="17"/>
    </location>
</feature>
<feature type="chain" id="PRO_0000327985" description="2-oxoisovalerate dehydrogenase subunit alpha, mitochondrial">
    <location>
        <begin position="18"/>
        <end position="441"/>
    </location>
</feature>
<feature type="binding site" evidence="1">
    <location>
        <begin position="145"/>
        <end position="147"/>
    </location>
    <ligand>
        <name>thiamine diphosphate</name>
        <dbReference type="ChEBI" id="CHEBI:58937"/>
    </ligand>
</feature>
<feature type="binding site" evidence="1">
    <location>
        <position position="194"/>
    </location>
    <ligand>
        <name>K(+)</name>
        <dbReference type="ChEBI" id="CHEBI:29103"/>
    </ligand>
</feature>
<feature type="binding site" evidence="1">
    <location>
        <position position="199"/>
    </location>
    <ligand>
        <name>K(+)</name>
        <dbReference type="ChEBI" id="CHEBI:29103"/>
    </ligand>
</feature>
<feature type="binding site" evidence="1">
    <location>
        <position position="200"/>
    </location>
    <ligand>
        <name>K(+)</name>
        <dbReference type="ChEBI" id="CHEBI:29103"/>
    </ligand>
</feature>
<gene>
    <name type="primary">bkdA</name>
    <name type="ORF">DDB_G0286335</name>
</gene>
<accession>Q54M22</accession>